<evidence type="ECO:0000255" key="1">
    <source>
        <dbReference type="HAMAP-Rule" id="MF_01456"/>
    </source>
</evidence>
<accession>Q7N2J6</accession>
<keyword id="KW-0997">Cell inner membrane</keyword>
<keyword id="KW-1003">Cell membrane</keyword>
<keyword id="KW-0472">Membrane</keyword>
<keyword id="KW-0520">NAD</keyword>
<keyword id="KW-0874">Quinone</keyword>
<keyword id="KW-1185">Reference proteome</keyword>
<keyword id="KW-1278">Translocase</keyword>
<keyword id="KW-0812">Transmembrane</keyword>
<keyword id="KW-1133">Transmembrane helix</keyword>
<keyword id="KW-0813">Transport</keyword>
<keyword id="KW-0830">Ubiquinone</keyword>
<reference key="1">
    <citation type="journal article" date="2003" name="Nat. Biotechnol.">
        <title>The genome sequence of the entomopathogenic bacterium Photorhabdus luminescens.</title>
        <authorList>
            <person name="Duchaud E."/>
            <person name="Rusniok C."/>
            <person name="Frangeul L."/>
            <person name="Buchrieser C."/>
            <person name="Givaudan A."/>
            <person name="Taourit S."/>
            <person name="Bocs S."/>
            <person name="Boursaux-Eude C."/>
            <person name="Chandler M."/>
            <person name="Charles J.-F."/>
            <person name="Dassa E."/>
            <person name="Derose R."/>
            <person name="Derzelle S."/>
            <person name="Freyssinet G."/>
            <person name="Gaudriault S."/>
            <person name="Medigue C."/>
            <person name="Lanois A."/>
            <person name="Powell K."/>
            <person name="Siguier P."/>
            <person name="Vincent R."/>
            <person name="Wingate V."/>
            <person name="Zouine M."/>
            <person name="Glaser P."/>
            <person name="Boemare N."/>
            <person name="Danchin A."/>
            <person name="Kunst F."/>
        </authorList>
    </citation>
    <scope>NUCLEOTIDE SEQUENCE [LARGE SCALE GENOMIC DNA]</scope>
    <source>
        <strain>DSM 15139 / CIP 105565 / TT01</strain>
    </source>
</reference>
<organism>
    <name type="scientific">Photorhabdus laumondii subsp. laumondii (strain DSM 15139 / CIP 105565 / TT01)</name>
    <name type="common">Photorhabdus luminescens subsp. laumondii</name>
    <dbReference type="NCBI Taxonomy" id="243265"/>
    <lineage>
        <taxon>Bacteria</taxon>
        <taxon>Pseudomonadati</taxon>
        <taxon>Pseudomonadota</taxon>
        <taxon>Gammaproteobacteria</taxon>
        <taxon>Enterobacterales</taxon>
        <taxon>Morganellaceae</taxon>
        <taxon>Photorhabdus</taxon>
    </lineage>
</organism>
<protein>
    <recommendedName>
        <fullName evidence="1">NADH-quinone oxidoreductase subunit K</fullName>
        <ecNumber evidence="1">7.1.1.-</ecNumber>
    </recommendedName>
    <alternativeName>
        <fullName evidence="1">NADH dehydrogenase I subunit K</fullName>
    </alternativeName>
    <alternativeName>
        <fullName evidence="1">NDH-1 subunit K</fullName>
    </alternativeName>
</protein>
<proteinExistence type="inferred from homology"/>
<dbReference type="EC" id="7.1.1.-" evidence="1"/>
<dbReference type="EMBL" id="BX571869">
    <property type="protein sequence ID" value="CAE15454.1"/>
    <property type="molecule type" value="Genomic_DNA"/>
</dbReference>
<dbReference type="RefSeq" id="WP_011147297.1">
    <property type="nucleotide sequence ID" value="NC_005126.1"/>
</dbReference>
<dbReference type="SMR" id="Q7N2J6"/>
<dbReference type="STRING" id="243265.plu3080"/>
<dbReference type="GeneID" id="88804704"/>
<dbReference type="KEGG" id="plu:plu3080"/>
<dbReference type="eggNOG" id="COG0713">
    <property type="taxonomic scope" value="Bacteria"/>
</dbReference>
<dbReference type="HOGENOM" id="CLU_144724_0_1_6"/>
<dbReference type="OrthoDB" id="9801357at2"/>
<dbReference type="Proteomes" id="UP000002514">
    <property type="component" value="Chromosome"/>
</dbReference>
<dbReference type="GO" id="GO:0030964">
    <property type="term" value="C:NADH dehydrogenase complex"/>
    <property type="evidence" value="ECO:0007669"/>
    <property type="project" value="TreeGrafter"/>
</dbReference>
<dbReference type="GO" id="GO:0005886">
    <property type="term" value="C:plasma membrane"/>
    <property type="evidence" value="ECO:0007669"/>
    <property type="project" value="UniProtKB-SubCell"/>
</dbReference>
<dbReference type="GO" id="GO:0050136">
    <property type="term" value="F:NADH:ubiquinone reductase (non-electrogenic) activity"/>
    <property type="evidence" value="ECO:0007669"/>
    <property type="project" value="UniProtKB-UniRule"/>
</dbReference>
<dbReference type="GO" id="GO:0048038">
    <property type="term" value="F:quinone binding"/>
    <property type="evidence" value="ECO:0007669"/>
    <property type="project" value="UniProtKB-KW"/>
</dbReference>
<dbReference type="GO" id="GO:0042773">
    <property type="term" value="P:ATP synthesis coupled electron transport"/>
    <property type="evidence" value="ECO:0007669"/>
    <property type="project" value="InterPro"/>
</dbReference>
<dbReference type="FunFam" id="1.10.287.3510:FF:000001">
    <property type="entry name" value="NADH-quinone oxidoreductase subunit K"/>
    <property type="match status" value="1"/>
</dbReference>
<dbReference type="Gene3D" id="1.10.287.3510">
    <property type="match status" value="1"/>
</dbReference>
<dbReference type="HAMAP" id="MF_01456">
    <property type="entry name" value="NDH1_NuoK"/>
    <property type="match status" value="1"/>
</dbReference>
<dbReference type="InterPro" id="IPR001133">
    <property type="entry name" value="NADH_UbQ_OxRdtase_chain4L/K"/>
</dbReference>
<dbReference type="InterPro" id="IPR039428">
    <property type="entry name" value="NUOK/Mnh_C1-like"/>
</dbReference>
<dbReference type="NCBIfam" id="NF004319">
    <property type="entry name" value="PRK05715.1-1"/>
    <property type="match status" value="1"/>
</dbReference>
<dbReference type="NCBIfam" id="NF004320">
    <property type="entry name" value="PRK05715.1-2"/>
    <property type="match status" value="1"/>
</dbReference>
<dbReference type="PANTHER" id="PTHR11434:SF16">
    <property type="entry name" value="NADH-UBIQUINONE OXIDOREDUCTASE CHAIN 4L"/>
    <property type="match status" value="1"/>
</dbReference>
<dbReference type="PANTHER" id="PTHR11434">
    <property type="entry name" value="NADH-UBIQUINONE OXIDOREDUCTASE SUBUNIT ND4L"/>
    <property type="match status" value="1"/>
</dbReference>
<dbReference type="Pfam" id="PF00420">
    <property type="entry name" value="Oxidored_q2"/>
    <property type="match status" value="1"/>
</dbReference>
<name>NUOK_PHOLL</name>
<sequence length="100" mass="10877">MIPLQHGLILAAILFVLGLTGLIIRRNLLFMLIGLEVMINAAALAFVVVGSYWGQPDGQVMFILAISLAAAEASIGLALLLQLYRRRQNLNIDTVSEMRG</sequence>
<gene>
    <name evidence="1" type="primary">nuoK</name>
    <name type="ordered locus">plu3080</name>
</gene>
<feature type="chain" id="PRO_0000390159" description="NADH-quinone oxidoreductase subunit K">
    <location>
        <begin position="1"/>
        <end position="100"/>
    </location>
</feature>
<feature type="transmembrane region" description="Helical" evidence="1">
    <location>
        <begin position="4"/>
        <end position="24"/>
    </location>
</feature>
<feature type="transmembrane region" description="Helical" evidence="1">
    <location>
        <begin position="29"/>
        <end position="49"/>
    </location>
</feature>
<feature type="transmembrane region" description="Helical" evidence="1">
    <location>
        <begin position="60"/>
        <end position="80"/>
    </location>
</feature>
<comment type="function">
    <text evidence="1">NDH-1 shuttles electrons from NADH, via FMN and iron-sulfur (Fe-S) centers, to quinones in the respiratory chain. The immediate electron acceptor for the enzyme in this species is believed to be ubiquinone. Couples the redox reaction to proton translocation (for every two electrons transferred, four hydrogen ions are translocated across the cytoplasmic membrane), and thus conserves the redox energy in a proton gradient.</text>
</comment>
<comment type="catalytic activity">
    <reaction evidence="1">
        <text>a quinone + NADH + 5 H(+)(in) = a quinol + NAD(+) + 4 H(+)(out)</text>
        <dbReference type="Rhea" id="RHEA:57888"/>
        <dbReference type="ChEBI" id="CHEBI:15378"/>
        <dbReference type="ChEBI" id="CHEBI:24646"/>
        <dbReference type="ChEBI" id="CHEBI:57540"/>
        <dbReference type="ChEBI" id="CHEBI:57945"/>
        <dbReference type="ChEBI" id="CHEBI:132124"/>
    </reaction>
</comment>
<comment type="subunit">
    <text evidence="1">NDH-1 is composed of 13 different subunits. Subunits NuoA, H, J, K, L, M, N constitute the membrane sector of the complex.</text>
</comment>
<comment type="subcellular location">
    <subcellularLocation>
        <location evidence="1">Cell inner membrane</location>
        <topology evidence="1">Multi-pass membrane protein</topology>
    </subcellularLocation>
</comment>
<comment type="similarity">
    <text evidence="1">Belongs to the complex I subunit 4L family.</text>
</comment>